<dbReference type="EMBL" id="BC118215">
    <property type="protein sequence ID" value="AAI18216.1"/>
    <property type="molecule type" value="mRNA"/>
</dbReference>
<dbReference type="RefSeq" id="NP_001069015.1">
    <property type="nucleotide sequence ID" value="NM_001075547.1"/>
</dbReference>
<dbReference type="SMR" id="Q17QS0"/>
<dbReference type="FunCoup" id="Q17QS0">
    <property type="interactions" value="382"/>
</dbReference>
<dbReference type="STRING" id="9913.ENSBTAP00000017239"/>
<dbReference type="PaxDb" id="9913-ENSBTAP00000017239"/>
<dbReference type="GeneID" id="511983"/>
<dbReference type="KEGG" id="bta:511983"/>
<dbReference type="CTD" id="79634"/>
<dbReference type="eggNOG" id="ENOG502QPIA">
    <property type="taxonomic scope" value="Eukaryota"/>
</dbReference>
<dbReference type="InParanoid" id="Q17QS0"/>
<dbReference type="OrthoDB" id="5175656at2759"/>
<dbReference type="Proteomes" id="UP000009136">
    <property type="component" value="Unplaced"/>
</dbReference>
<dbReference type="GO" id="GO:0070004">
    <property type="term" value="F:cysteine-type exopeptidase activity"/>
    <property type="evidence" value="ECO:0007669"/>
    <property type="project" value="InterPro"/>
</dbReference>
<dbReference type="GO" id="GO:0016805">
    <property type="term" value="F:dipeptidase activity"/>
    <property type="evidence" value="ECO:0007669"/>
    <property type="project" value="InterPro"/>
</dbReference>
<dbReference type="GO" id="GO:0050965">
    <property type="term" value="P:detection of temperature stimulus involved in sensory perception of pain"/>
    <property type="evidence" value="ECO:0000250"/>
    <property type="project" value="UniProtKB"/>
</dbReference>
<dbReference type="GO" id="GO:0006508">
    <property type="term" value="P:proteolysis"/>
    <property type="evidence" value="ECO:0007669"/>
    <property type="project" value="InterPro"/>
</dbReference>
<dbReference type="FunFam" id="3.60.60.10:FF:000001">
    <property type="entry name" value="Secernin 1"/>
    <property type="match status" value="1"/>
</dbReference>
<dbReference type="Gene3D" id="3.60.60.10">
    <property type="entry name" value="Penicillin V Acylase, Chain A"/>
    <property type="match status" value="1"/>
</dbReference>
<dbReference type="InterPro" id="IPR005322">
    <property type="entry name" value="Peptidase_C69"/>
</dbReference>
<dbReference type="PANTHER" id="PTHR12994">
    <property type="entry name" value="SECERNIN"/>
    <property type="match status" value="1"/>
</dbReference>
<dbReference type="PANTHER" id="PTHR12994:SF18">
    <property type="entry name" value="SECERNIN-3"/>
    <property type="match status" value="1"/>
</dbReference>
<dbReference type="Pfam" id="PF03577">
    <property type="entry name" value="Peptidase_C69"/>
    <property type="match status" value="1"/>
</dbReference>
<gene>
    <name type="primary">SCRN3</name>
</gene>
<name>SCRN3_BOVIN</name>
<keyword id="KW-0670">Pyruvate</keyword>
<keyword id="KW-1185">Reference proteome</keyword>
<sequence>MEPCSCDTFVALPPATIDNRIIFGKNSDRPCDEVQEVVYFPAAVHDNLKEHLKCTYIEIDQVPETYAVVLSRPAWLWGAEMGANEHGVCIGNEAVWGREKVCDEEALLGMDLVRLGLERGDTAEKALNVIVDLLEKYGQGGNCSEGRMVFSYHNSFLIADRNEAWILETAGKYWAAEKVEEGVRNISNQLSIMTKIDREHPDMRNYAKQRGWWDGKKEFDFAATYSYLDTAKMMISPGRYCEGYKLLNKHKGNITFETMVEILRDKPSGINMEGEFLTTASMVSILPQDSKLPCIHFFTGTPDPERSVFKPFIFVPNISQLLNTSSPTFELEDSVGKKLQFNSKPDRRHPLYQKHQQALEILDNKTEKAKTMLDNMRKLEKELFKEMESVLQNKHLQVDKIVNLLHQCTEDEIRIYKSNVSS</sequence>
<protein>
    <recommendedName>
        <fullName>Secernin-3</fullName>
    </recommendedName>
</protein>
<organism>
    <name type="scientific">Bos taurus</name>
    <name type="common">Bovine</name>
    <dbReference type="NCBI Taxonomy" id="9913"/>
    <lineage>
        <taxon>Eukaryota</taxon>
        <taxon>Metazoa</taxon>
        <taxon>Chordata</taxon>
        <taxon>Craniata</taxon>
        <taxon>Vertebrata</taxon>
        <taxon>Euteleostomi</taxon>
        <taxon>Mammalia</taxon>
        <taxon>Eutheria</taxon>
        <taxon>Laurasiatheria</taxon>
        <taxon>Artiodactyla</taxon>
        <taxon>Ruminantia</taxon>
        <taxon>Pecora</taxon>
        <taxon>Bovidae</taxon>
        <taxon>Bovinae</taxon>
        <taxon>Bos</taxon>
    </lineage>
</organism>
<proteinExistence type="evidence at transcript level"/>
<evidence type="ECO:0000250" key="1">
    <source>
        <dbReference type="UniProtKB" id="Q0VDG4"/>
    </source>
</evidence>
<evidence type="ECO:0000250" key="2">
    <source>
        <dbReference type="UniProtKB" id="Q3TMH2"/>
    </source>
</evidence>
<evidence type="ECO:0000255" key="3"/>
<evidence type="ECO:0000305" key="4"/>
<accession>Q17QS0</accession>
<reference key="1">
    <citation type="submission" date="2006-06" db="EMBL/GenBank/DDBJ databases">
        <authorList>
            <consortium name="NIH - Mammalian Gene Collection (MGC) project"/>
        </authorList>
    </citation>
    <scope>NUCLEOTIDE SEQUENCE [LARGE SCALE MRNA]</scope>
    <source>
        <strain>Hereford</strain>
        <tissue>Thalamus</tissue>
    </source>
</reference>
<comment type="function">
    <text evidence="2">Plays a role in thermal nociception.</text>
</comment>
<comment type="similarity">
    <text evidence="4">Belongs to the peptidase C69 family. Secernin subfamily.</text>
</comment>
<feature type="propeptide" id="PRO_0000461893" evidence="1">
    <location>
        <begin position="1"/>
        <end position="5"/>
    </location>
</feature>
<feature type="chain" id="PRO_0000262558" description="Secernin-3">
    <location>
        <begin position="6"/>
        <end position="422"/>
    </location>
</feature>
<feature type="active site" evidence="3">
    <location>
        <position position="6"/>
    </location>
</feature>
<feature type="modified residue" description="Glyoxylic acid (Cys); alternate" evidence="1">
    <location>
        <position position="6"/>
    </location>
</feature>
<feature type="modified residue" description="Pyruvic acid (Cys); alternate" evidence="1">
    <location>
        <position position="6"/>
    </location>
</feature>